<feature type="chain" id="PRO_0000272720" description="Large ribosomal subunit protein uL23">
    <location>
        <begin position="1"/>
        <end position="104"/>
    </location>
</feature>
<keyword id="KW-0687">Ribonucleoprotein</keyword>
<keyword id="KW-0689">Ribosomal protein</keyword>
<keyword id="KW-0694">RNA-binding</keyword>
<keyword id="KW-0699">rRNA-binding</keyword>
<dbReference type="EMBL" id="CP000440">
    <property type="protein sequence ID" value="ABI85829.1"/>
    <property type="molecule type" value="Genomic_DNA"/>
</dbReference>
<dbReference type="RefSeq" id="WP_004199275.1">
    <property type="nucleotide sequence ID" value="NZ_CP009798.1"/>
</dbReference>
<dbReference type="SMR" id="Q0BJ44"/>
<dbReference type="GeneID" id="98107158"/>
<dbReference type="KEGG" id="bam:Bamb_0269"/>
<dbReference type="PATRIC" id="fig|339670.21.peg.1351"/>
<dbReference type="eggNOG" id="COG0089">
    <property type="taxonomic scope" value="Bacteria"/>
</dbReference>
<dbReference type="Proteomes" id="UP000000662">
    <property type="component" value="Chromosome 1"/>
</dbReference>
<dbReference type="GO" id="GO:1990904">
    <property type="term" value="C:ribonucleoprotein complex"/>
    <property type="evidence" value="ECO:0007669"/>
    <property type="project" value="UniProtKB-KW"/>
</dbReference>
<dbReference type="GO" id="GO:0005840">
    <property type="term" value="C:ribosome"/>
    <property type="evidence" value="ECO:0007669"/>
    <property type="project" value="UniProtKB-KW"/>
</dbReference>
<dbReference type="GO" id="GO:0019843">
    <property type="term" value="F:rRNA binding"/>
    <property type="evidence" value="ECO:0007669"/>
    <property type="project" value="UniProtKB-UniRule"/>
</dbReference>
<dbReference type="GO" id="GO:0003735">
    <property type="term" value="F:structural constituent of ribosome"/>
    <property type="evidence" value="ECO:0007669"/>
    <property type="project" value="InterPro"/>
</dbReference>
<dbReference type="GO" id="GO:0006412">
    <property type="term" value="P:translation"/>
    <property type="evidence" value="ECO:0007669"/>
    <property type="project" value="UniProtKB-UniRule"/>
</dbReference>
<dbReference type="FunFam" id="3.30.70.330:FF:000001">
    <property type="entry name" value="50S ribosomal protein L23"/>
    <property type="match status" value="1"/>
</dbReference>
<dbReference type="Gene3D" id="3.30.70.330">
    <property type="match status" value="1"/>
</dbReference>
<dbReference type="HAMAP" id="MF_01369_B">
    <property type="entry name" value="Ribosomal_uL23_B"/>
    <property type="match status" value="1"/>
</dbReference>
<dbReference type="InterPro" id="IPR012677">
    <property type="entry name" value="Nucleotide-bd_a/b_plait_sf"/>
</dbReference>
<dbReference type="InterPro" id="IPR013025">
    <property type="entry name" value="Ribosomal_uL23-like"/>
</dbReference>
<dbReference type="InterPro" id="IPR012678">
    <property type="entry name" value="Ribosomal_uL23/eL15/eS24_sf"/>
</dbReference>
<dbReference type="NCBIfam" id="NF004359">
    <property type="entry name" value="PRK05738.1-3"/>
    <property type="match status" value="1"/>
</dbReference>
<dbReference type="NCBIfam" id="NF004363">
    <property type="entry name" value="PRK05738.2-4"/>
    <property type="match status" value="1"/>
</dbReference>
<dbReference type="PANTHER" id="PTHR11620">
    <property type="entry name" value="60S RIBOSOMAL PROTEIN L23A"/>
    <property type="match status" value="1"/>
</dbReference>
<dbReference type="Pfam" id="PF00276">
    <property type="entry name" value="Ribosomal_L23"/>
    <property type="match status" value="1"/>
</dbReference>
<dbReference type="SUPFAM" id="SSF54189">
    <property type="entry name" value="Ribosomal proteins S24e, L23 and L15e"/>
    <property type="match status" value="1"/>
</dbReference>
<name>RL23_BURCM</name>
<protein>
    <recommendedName>
        <fullName evidence="1">Large ribosomal subunit protein uL23</fullName>
    </recommendedName>
    <alternativeName>
        <fullName evidence="2">50S ribosomal protein L23</fullName>
    </alternativeName>
</protein>
<evidence type="ECO:0000255" key="1">
    <source>
        <dbReference type="HAMAP-Rule" id="MF_01369"/>
    </source>
</evidence>
<evidence type="ECO:0000305" key="2"/>
<comment type="function">
    <text evidence="1">One of the early assembly proteins it binds 23S rRNA. One of the proteins that surrounds the polypeptide exit tunnel on the outside of the ribosome. Forms the main docking site for trigger factor binding to the ribosome.</text>
</comment>
<comment type="subunit">
    <text evidence="1">Part of the 50S ribosomal subunit. Contacts protein L29, and trigger factor when it is bound to the ribosome.</text>
</comment>
<comment type="similarity">
    <text evidence="1">Belongs to the universal ribosomal protein uL23 family.</text>
</comment>
<reference key="1">
    <citation type="submission" date="2006-08" db="EMBL/GenBank/DDBJ databases">
        <title>Complete sequence of chromosome 1 of Burkholderia cepacia AMMD.</title>
        <authorList>
            <person name="Copeland A."/>
            <person name="Lucas S."/>
            <person name="Lapidus A."/>
            <person name="Barry K."/>
            <person name="Detter J.C."/>
            <person name="Glavina del Rio T."/>
            <person name="Hammon N."/>
            <person name="Israni S."/>
            <person name="Pitluck S."/>
            <person name="Bruce D."/>
            <person name="Chain P."/>
            <person name="Malfatti S."/>
            <person name="Shin M."/>
            <person name="Vergez L."/>
            <person name="Schmutz J."/>
            <person name="Larimer F."/>
            <person name="Land M."/>
            <person name="Hauser L."/>
            <person name="Kyrpides N."/>
            <person name="Kim E."/>
            <person name="Parke J."/>
            <person name="Coenye T."/>
            <person name="Konstantinidis K."/>
            <person name="Ramette A."/>
            <person name="Tiedje J."/>
            <person name="Richardson P."/>
        </authorList>
    </citation>
    <scope>NUCLEOTIDE SEQUENCE [LARGE SCALE GENOMIC DNA]</scope>
    <source>
        <strain>ATCC BAA-244 / DSM 16087 / CCUG 44356 / LMG 19182 / AMMD</strain>
    </source>
</reference>
<accession>Q0BJ44</accession>
<proteinExistence type="inferred from homology"/>
<organism>
    <name type="scientific">Burkholderia ambifaria (strain ATCC BAA-244 / DSM 16087 / CCUG 44356 / LMG 19182 / AMMD)</name>
    <name type="common">Burkholderia cepacia (strain AMMD)</name>
    <dbReference type="NCBI Taxonomy" id="339670"/>
    <lineage>
        <taxon>Bacteria</taxon>
        <taxon>Pseudomonadati</taxon>
        <taxon>Pseudomonadota</taxon>
        <taxon>Betaproteobacteria</taxon>
        <taxon>Burkholderiales</taxon>
        <taxon>Burkholderiaceae</taxon>
        <taxon>Burkholderia</taxon>
        <taxon>Burkholderia cepacia complex</taxon>
    </lineage>
</organism>
<gene>
    <name evidence="1" type="primary">rplW</name>
    <name type="ordered locus">Bamb_0269</name>
</gene>
<sequence length="104" mass="11740">MSEIRKNDHRLMQVLLAPVISEKATLVADKNEQVVFEVAPDATKQEVKAAVELLFKVEVDSVNVLVQKGKQKRFGRSMGRRKDVKKAYVCLKPGQEINFEAEAK</sequence>